<proteinExistence type="inferred from homology"/>
<evidence type="ECO:0000255" key="1">
    <source>
        <dbReference type="HAMAP-Rule" id="MF_01322"/>
    </source>
</evidence>
<gene>
    <name evidence="1" type="primary">rpoC</name>
    <name type="ordered locus">MAB_3868c</name>
</gene>
<sequence>MLDVNFFDELRIGLASADDIRNWSFGEVKKPETINYRTLKPEKDGLFCEKIFGPTRDWECYCGKYKRVRFKGIICERCGVEVTRAKVRRERMGHIELAAPVTHIWYFKGVPSRLGYLLDLAPKDLEKIIYFAAYVITAVDDELRHNELSTLEAEMEVEKKAVADQRDADLEARAQKLEADLAELEAEGAKSDVRRKVRDGGEREMRQLRDRSQRELDRLDEIWTTFTKLAPKQLIVDEVLYRELVDRYGEYFTGAMGAEAVQKLIQNFDLDAEAENLRETIRSGKGQKKLRALKRLKVVAAFQNSTNSPGGMVLDAVPVIPPELRPMVQLDGGRFATSDLNDLYRRVINRNNRLKRLIDLGAPEIIVNNEKRMLQESVDALFDNGRRGRPVTGPGNRPLKSLSDLLKGKQGRFRQNLLGKRVDYSGRSVIVVGPQLKLHQCGLPKLMALELFKPFVMKRLVDLNHAQNIKSAKRMVERQRAQVWDVLEEVIAEHPVLLNRAPTLHRLGIQAFEPQLVEGKAIQLHPLVCEAFNADFDGDQMAVHLPLSAEAQAEARILMLSSNNILSPASGRPLAMPRLDMVTGLYFLTTEIPGDIGAHAPAGKDQPEVGVYSSPAEAIMAMDRGALSVRAPIRVRLTQQRPPAEVEAELFENGWQPGDAWVAETTLGRVLFNELLPHGYPFVNKQMHKKVQSAIINDLAERFPMIVVAQTVDKLKDAGFHWATRSGVTVSMADVLVPPQKAEILDRYEKEAERIEKQYQRGALNQQERRDALVKIWQEATDEVGKALEEHYPADNPITLLPKSGATGNMTQVRNLAGMKGLVTNPKGEYIPRPIKSSFREGLTVLEYFINTHGARKGLADTALRTADSGYLTRRLVDVSQDVIVREHDCGTERGINVVIAEKQTGPDGKATLIRDAHIETSAYARTLAADAVDADGNVLVERGHDLGDPAIEKLLAAGVTTVKVRSVLTCTTGTGVCAMCYGRSMATGKLVDIGEAAGIVAAQSIGEPGTQLTMRTFHQGGVGDDITGGLPRVTELFEARVPKGKAPIADVTGRVRLEEGERFYKITIVPDDGGEEVVYDKLSKRQRLRVFKHEDGSERPLADGDHVEVGQQLMEGAADPHEVLRVMGPRQVQVHLVNEVQEVYRSQGVSIHDKHIEVIVRQMLRRVTIIDSGATEFLPGSLTERAEFESENRRVVAEGGEPAAGRPVLMGITKASLATDSWLSAASFQETTRVLTDAAINCRSDKLNGLKENVIIGKLIPAGTGINRYRNISVQPTEEARAAAYTIPSYEDQYYSPDFGSNTGAAVPLDDYGYSDYR</sequence>
<reference key="1">
    <citation type="journal article" date="2009" name="PLoS ONE">
        <title>Non mycobacterial virulence genes in the genome of the emerging pathogen Mycobacterium abscessus.</title>
        <authorList>
            <person name="Ripoll F."/>
            <person name="Pasek S."/>
            <person name="Schenowitz C."/>
            <person name="Dossat C."/>
            <person name="Barbe V."/>
            <person name="Rottman M."/>
            <person name="Macheras E."/>
            <person name="Heym B."/>
            <person name="Herrmann J.L."/>
            <person name="Daffe M."/>
            <person name="Brosch R."/>
            <person name="Risler J.L."/>
            <person name="Gaillard J.L."/>
        </authorList>
    </citation>
    <scope>NUCLEOTIDE SEQUENCE [LARGE SCALE GENOMIC DNA]</scope>
    <source>
        <strain>ATCC 19977 / DSM 44196 / CCUG 20993 / CIP 104536 / JCM 13569 / NCTC 13031 / TMC 1543 / L948</strain>
    </source>
</reference>
<accession>B1MH61</accession>
<comment type="function">
    <text evidence="1">DNA-dependent RNA polymerase catalyzes the transcription of DNA into RNA using the four ribonucleoside triphosphates as substrates.</text>
</comment>
<comment type="catalytic activity">
    <reaction evidence="1">
        <text>RNA(n) + a ribonucleoside 5'-triphosphate = RNA(n+1) + diphosphate</text>
        <dbReference type="Rhea" id="RHEA:21248"/>
        <dbReference type="Rhea" id="RHEA-COMP:14527"/>
        <dbReference type="Rhea" id="RHEA-COMP:17342"/>
        <dbReference type="ChEBI" id="CHEBI:33019"/>
        <dbReference type="ChEBI" id="CHEBI:61557"/>
        <dbReference type="ChEBI" id="CHEBI:140395"/>
        <dbReference type="EC" id="2.7.7.6"/>
    </reaction>
</comment>
<comment type="cofactor">
    <cofactor evidence="1">
        <name>Mg(2+)</name>
        <dbReference type="ChEBI" id="CHEBI:18420"/>
    </cofactor>
    <text evidence="1">Binds 1 Mg(2+) ion per subunit.</text>
</comment>
<comment type="cofactor">
    <cofactor evidence="1">
        <name>Zn(2+)</name>
        <dbReference type="ChEBI" id="CHEBI:29105"/>
    </cofactor>
    <text evidence="1">Binds 2 Zn(2+) ions per subunit.</text>
</comment>
<comment type="subunit">
    <text evidence="1">The RNAP catalytic core consists of 2 alpha, 1 beta, 1 beta' and 1 omega subunit. When a sigma factor is associated with the core the holoenzyme is formed, which can initiate transcription.</text>
</comment>
<comment type="similarity">
    <text evidence="1">Belongs to the RNA polymerase beta' chain family.</text>
</comment>
<feature type="chain" id="PRO_1000141784" description="DNA-directed RNA polymerase subunit beta'">
    <location>
        <begin position="1"/>
        <end position="1319"/>
    </location>
</feature>
<feature type="binding site" evidence="1">
    <location>
        <position position="60"/>
    </location>
    <ligand>
        <name>Zn(2+)</name>
        <dbReference type="ChEBI" id="CHEBI:29105"/>
        <label>1</label>
    </ligand>
</feature>
<feature type="binding site" evidence="1">
    <location>
        <position position="62"/>
    </location>
    <ligand>
        <name>Zn(2+)</name>
        <dbReference type="ChEBI" id="CHEBI:29105"/>
        <label>1</label>
    </ligand>
</feature>
<feature type="binding site" evidence="1">
    <location>
        <position position="75"/>
    </location>
    <ligand>
        <name>Zn(2+)</name>
        <dbReference type="ChEBI" id="CHEBI:29105"/>
        <label>1</label>
    </ligand>
</feature>
<feature type="binding site" evidence="1">
    <location>
        <position position="78"/>
    </location>
    <ligand>
        <name>Zn(2+)</name>
        <dbReference type="ChEBI" id="CHEBI:29105"/>
        <label>1</label>
    </ligand>
</feature>
<feature type="binding site" evidence="1">
    <location>
        <position position="535"/>
    </location>
    <ligand>
        <name>Mg(2+)</name>
        <dbReference type="ChEBI" id="CHEBI:18420"/>
    </ligand>
</feature>
<feature type="binding site" evidence="1">
    <location>
        <position position="537"/>
    </location>
    <ligand>
        <name>Mg(2+)</name>
        <dbReference type="ChEBI" id="CHEBI:18420"/>
    </ligand>
</feature>
<feature type="binding site" evidence="1">
    <location>
        <position position="539"/>
    </location>
    <ligand>
        <name>Mg(2+)</name>
        <dbReference type="ChEBI" id="CHEBI:18420"/>
    </ligand>
</feature>
<feature type="binding site" evidence="1">
    <location>
        <position position="890"/>
    </location>
    <ligand>
        <name>Zn(2+)</name>
        <dbReference type="ChEBI" id="CHEBI:29105"/>
        <label>2</label>
    </ligand>
</feature>
<feature type="binding site" evidence="1">
    <location>
        <position position="971"/>
    </location>
    <ligand>
        <name>Zn(2+)</name>
        <dbReference type="ChEBI" id="CHEBI:29105"/>
        <label>2</label>
    </ligand>
</feature>
<feature type="binding site" evidence="1">
    <location>
        <position position="978"/>
    </location>
    <ligand>
        <name>Zn(2+)</name>
        <dbReference type="ChEBI" id="CHEBI:29105"/>
        <label>2</label>
    </ligand>
</feature>
<feature type="binding site" evidence="1">
    <location>
        <position position="981"/>
    </location>
    <ligand>
        <name>Zn(2+)</name>
        <dbReference type="ChEBI" id="CHEBI:29105"/>
        <label>2</label>
    </ligand>
</feature>
<dbReference type="EC" id="2.7.7.6" evidence="1"/>
<dbReference type="EMBL" id="CU458896">
    <property type="protein sequence ID" value="CAM63942.1"/>
    <property type="molecule type" value="Genomic_DNA"/>
</dbReference>
<dbReference type="RefSeq" id="WP_005077661.1">
    <property type="nucleotide sequence ID" value="NZ_MLCG01000001.1"/>
</dbReference>
<dbReference type="SMR" id="B1MH61"/>
<dbReference type="GeneID" id="93380806"/>
<dbReference type="KEGG" id="mab:MAB_3868c"/>
<dbReference type="Proteomes" id="UP000007137">
    <property type="component" value="Chromosome"/>
</dbReference>
<dbReference type="GO" id="GO:0000428">
    <property type="term" value="C:DNA-directed RNA polymerase complex"/>
    <property type="evidence" value="ECO:0007669"/>
    <property type="project" value="UniProtKB-KW"/>
</dbReference>
<dbReference type="GO" id="GO:0003677">
    <property type="term" value="F:DNA binding"/>
    <property type="evidence" value="ECO:0007669"/>
    <property type="project" value="UniProtKB-UniRule"/>
</dbReference>
<dbReference type="GO" id="GO:0003899">
    <property type="term" value="F:DNA-directed RNA polymerase activity"/>
    <property type="evidence" value="ECO:0007669"/>
    <property type="project" value="UniProtKB-UniRule"/>
</dbReference>
<dbReference type="GO" id="GO:0000287">
    <property type="term" value="F:magnesium ion binding"/>
    <property type="evidence" value="ECO:0007669"/>
    <property type="project" value="UniProtKB-UniRule"/>
</dbReference>
<dbReference type="GO" id="GO:0008270">
    <property type="term" value="F:zinc ion binding"/>
    <property type="evidence" value="ECO:0007669"/>
    <property type="project" value="UniProtKB-UniRule"/>
</dbReference>
<dbReference type="GO" id="GO:0006351">
    <property type="term" value="P:DNA-templated transcription"/>
    <property type="evidence" value="ECO:0007669"/>
    <property type="project" value="UniProtKB-UniRule"/>
</dbReference>
<dbReference type="CDD" id="cd02655">
    <property type="entry name" value="RNAP_beta'_C"/>
    <property type="match status" value="1"/>
</dbReference>
<dbReference type="CDD" id="cd01609">
    <property type="entry name" value="RNAP_beta'_N"/>
    <property type="match status" value="1"/>
</dbReference>
<dbReference type="FunFam" id="1.10.150.390:FF:000002">
    <property type="entry name" value="DNA-directed RNA polymerase subunit beta"/>
    <property type="match status" value="1"/>
</dbReference>
<dbReference type="FunFam" id="1.10.40.90:FF:000001">
    <property type="entry name" value="DNA-directed RNA polymerase subunit beta"/>
    <property type="match status" value="1"/>
</dbReference>
<dbReference type="FunFam" id="4.10.860.120:FF:000001">
    <property type="entry name" value="DNA-directed RNA polymerase subunit beta"/>
    <property type="match status" value="1"/>
</dbReference>
<dbReference type="Gene3D" id="1.10.132.30">
    <property type="match status" value="1"/>
</dbReference>
<dbReference type="Gene3D" id="1.10.150.390">
    <property type="match status" value="1"/>
</dbReference>
<dbReference type="Gene3D" id="1.10.1790.20">
    <property type="match status" value="1"/>
</dbReference>
<dbReference type="Gene3D" id="1.10.40.90">
    <property type="match status" value="1"/>
</dbReference>
<dbReference type="Gene3D" id="2.40.40.20">
    <property type="match status" value="1"/>
</dbReference>
<dbReference type="Gene3D" id="2.40.50.100">
    <property type="match status" value="1"/>
</dbReference>
<dbReference type="Gene3D" id="4.10.860.120">
    <property type="entry name" value="RNA polymerase II, clamp domain"/>
    <property type="match status" value="1"/>
</dbReference>
<dbReference type="Gene3D" id="1.10.274.100">
    <property type="entry name" value="RNA polymerase Rpb1, domain 3"/>
    <property type="match status" value="1"/>
</dbReference>
<dbReference type="HAMAP" id="MF_01322">
    <property type="entry name" value="RNApol_bact_RpoC"/>
    <property type="match status" value="1"/>
</dbReference>
<dbReference type="InterPro" id="IPR045867">
    <property type="entry name" value="DNA-dir_RpoC_beta_prime"/>
</dbReference>
<dbReference type="InterPro" id="IPR012754">
    <property type="entry name" value="DNA-dir_RpoC_beta_prime_bact"/>
</dbReference>
<dbReference type="InterPro" id="IPR000722">
    <property type="entry name" value="RNA_pol_asu"/>
</dbReference>
<dbReference type="InterPro" id="IPR006592">
    <property type="entry name" value="RNA_pol_N"/>
</dbReference>
<dbReference type="InterPro" id="IPR007080">
    <property type="entry name" value="RNA_pol_Rpb1_1"/>
</dbReference>
<dbReference type="InterPro" id="IPR007066">
    <property type="entry name" value="RNA_pol_Rpb1_3"/>
</dbReference>
<dbReference type="InterPro" id="IPR042102">
    <property type="entry name" value="RNA_pol_Rpb1_3_sf"/>
</dbReference>
<dbReference type="InterPro" id="IPR007083">
    <property type="entry name" value="RNA_pol_Rpb1_4"/>
</dbReference>
<dbReference type="InterPro" id="IPR007081">
    <property type="entry name" value="RNA_pol_Rpb1_5"/>
</dbReference>
<dbReference type="InterPro" id="IPR044893">
    <property type="entry name" value="RNA_pol_Rpb1_clamp_domain"/>
</dbReference>
<dbReference type="InterPro" id="IPR038120">
    <property type="entry name" value="Rpb1_funnel_sf"/>
</dbReference>
<dbReference type="NCBIfam" id="NF011498">
    <property type="entry name" value="PRK14906.1"/>
    <property type="match status" value="1"/>
</dbReference>
<dbReference type="NCBIfam" id="TIGR02386">
    <property type="entry name" value="rpoC_TIGR"/>
    <property type="match status" value="1"/>
</dbReference>
<dbReference type="PANTHER" id="PTHR19376">
    <property type="entry name" value="DNA-DIRECTED RNA POLYMERASE"/>
    <property type="match status" value="1"/>
</dbReference>
<dbReference type="PANTHER" id="PTHR19376:SF54">
    <property type="entry name" value="DNA-DIRECTED RNA POLYMERASE SUBUNIT BETA"/>
    <property type="match status" value="1"/>
</dbReference>
<dbReference type="Pfam" id="PF04997">
    <property type="entry name" value="RNA_pol_Rpb1_1"/>
    <property type="match status" value="1"/>
</dbReference>
<dbReference type="Pfam" id="PF00623">
    <property type="entry name" value="RNA_pol_Rpb1_2"/>
    <property type="match status" value="2"/>
</dbReference>
<dbReference type="Pfam" id="PF04983">
    <property type="entry name" value="RNA_pol_Rpb1_3"/>
    <property type="match status" value="1"/>
</dbReference>
<dbReference type="Pfam" id="PF05000">
    <property type="entry name" value="RNA_pol_Rpb1_4"/>
    <property type="match status" value="1"/>
</dbReference>
<dbReference type="Pfam" id="PF04998">
    <property type="entry name" value="RNA_pol_Rpb1_5"/>
    <property type="match status" value="1"/>
</dbReference>
<dbReference type="SMART" id="SM00663">
    <property type="entry name" value="RPOLA_N"/>
    <property type="match status" value="1"/>
</dbReference>
<dbReference type="SUPFAM" id="SSF64484">
    <property type="entry name" value="beta and beta-prime subunits of DNA dependent RNA-polymerase"/>
    <property type="match status" value="1"/>
</dbReference>
<protein>
    <recommendedName>
        <fullName evidence="1">DNA-directed RNA polymerase subunit beta'</fullName>
        <shortName evidence="1">RNAP subunit beta'</shortName>
        <ecNumber evidence="1">2.7.7.6</ecNumber>
    </recommendedName>
    <alternativeName>
        <fullName evidence="1">RNA polymerase subunit beta'</fullName>
    </alternativeName>
    <alternativeName>
        <fullName evidence="1">Transcriptase subunit beta'</fullName>
    </alternativeName>
</protein>
<name>RPOC_MYCA9</name>
<keyword id="KW-0240">DNA-directed RNA polymerase</keyword>
<keyword id="KW-0460">Magnesium</keyword>
<keyword id="KW-0479">Metal-binding</keyword>
<keyword id="KW-0548">Nucleotidyltransferase</keyword>
<keyword id="KW-1185">Reference proteome</keyword>
<keyword id="KW-0804">Transcription</keyword>
<keyword id="KW-0808">Transferase</keyword>
<keyword id="KW-0862">Zinc</keyword>
<organism>
    <name type="scientific">Mycobacteroides abscessus (strain ATCC 19977 / DSM 44196 / CCUG 20993 / CIP 104536 / JCM 13569 / NCTC 13031 / TMC 1543 / L948)</name>
    <name type="common">Mycobacterium abscessus</name>
    <dbReference type="NCBI Taxonomy" id="561007"/>
    <lineage>
        <taxon>Bacteria</taxon>
        <taxon>Bacillati</taxon>
        <taxon>Actinomycetota</taxon>
        <taxon>Actinomycetes</taxon>
        <taxon>Mycobacteriales</taxon>
        <taxon>Mycobacteriaceae</taxon>
        <taxon>Mycobacteroides</taxon>
        <taxon>Mycobacteroides abscessus</taxon>
    </lineage>
</organism>